<organism>
    <name type="scientific">Agrobacterium fabrum (strain C58 / ATCC 33970)</name>
    <name type="common">Agrobacterium tumefaciens (strain C58)</name>
    <dbReference type="NCBI Taxonomy" id="176299"/>
    <lineage>
        <taxon>Bacteria</taxon>
        <taxon>Pseudomonadati</taxon>
        <taxon>Pseudomonadota</taxon>
        <taxon>Alphaproteobacteria</taxon>
        <taxon>Hyphomicrobiales</taxon>
        <taxon>Rhizobiaceae</taxon>
        <taxon>Rhizobium/Agrobacterium group</taxon>
        <taxon>Agrobacterium</taxon>
        <taxon>Agrobacterium tumefaciens complex</taxon>
    </lineage>
</organism>
<sequence>MIAAPTQLAIMPFPNIDPIALSIGPLAIHWYGIAYVAGIMLGWFYARRLARTDRLWPNDTSPISAQHLDDFILWAAGGIVLGGRIGYILFYDMAAVAANPIRAIEIWNGGMSFHGGLIGTTIAMILFARRNGIPVWSMFDIIAAVAPIGLLFGRIANFINGELWGRIADVPWAVVFPTGGPFARHPSQLYEAGLEGLVLVVLLAIAIYVFKALKTPGTVTGIFVCGYALSRIFVEFFREPDAQIGYLAGNWLTMGMVLSTPMFLLGLWAVLRARSATKSA</sequence>
<name>LGT_AGRFC</name>
<gene>
    <name evidence="1" type="primary">lgt</name>
    <name type="ordered locus">Atu2213</name>
    <name type="ORF">AGR_C_4022</name>
</gene>
<comment type="function">
    <text evidence="1">Catalyzes the transfer of the diacylglyceryl group from phosphatidylglycerol to the sulfhydryl group of the N-terminal cysteine of a prolipoprotein, the first step in the formation of mature lipoproteins.</text>
</comment>
<comment type="catalytic activity">
    <reaction evidence="1">
        <text>L-cysteinyl-[prolipoprotein] + a 1,2-diacyl-sn-glycero-3-phospho-(1'-sn-glycerol) = an S-1,2-diacyl-sn-glyceryl-L-cysteinyl-[prolipoprotein] + sn-glycerol 1-phosphate + H(+)</text>
        <dbReference type="Rhea" id="RHEA:56712"/>
        <dbReference type="Rhea" id="RHEA-COMP:14679"/>
        <dbReference type="Rhea" id="RHEA-COMP:14680"/>
        <dbReference type="ChEBI" id="CHEBI:15378"/>
        <dbReference type="ChEBI" id="CHEBI:29950"/>
        <dbReference type="ChEBI" id="CHEBI:57685"/>
        <dbReference type="ChEBI" id="CHEBI:64716"/>
        <dbReference type="ChEBI" id="CHEBI:140658"/>
        <dbReference type="EC" id="2.5.1.145"/>
    </reaction>
</comment>
<comment type="pathway">
    <text evidence="1">Protein modification; lipoprotein biosynthesis (diacylglyceryl transfer).</text>
</comment>
<comment type="subcellular location">
    <subcellularLocation>
        <location evidence="1">Cell inner membrane</location>
        <topology evidence="1">Multi-pass membrane protein</topology>
    </subcellularLocation>
</comment>
<comment type="similarity">
    <text evidence="1">Belongs to the Lgt family.</text>
</comment>
<evidence type="ECO:0000255" key="1">
    <source>
        <dbReference type="HAMAP-Rule" id="MF_01147"/>
    </source>
</evidence>
<dbReference type="EC" id="2.5.1.145" evidence="1"/>
<dbReference type="EMBL" id="AE007869">
    <property type="protein sequence ID" value="AAK87955.1"/>
    <property type="molecule type" value="Genomic_DNA"/>
</dbReference>
<dbReference type="PIR" id="AD2848">
    <property type="entry name" value="AD2848"/>
</dbReference>
<dbReference type="PIR" id="B97625">
    <property type="entry name" value="B97625"/>
</dbReference>
<dbReference type="RefSeq" id="NP_355170.1">
    <property type="nucleotide sequence ID" value="NC_003062.2"/>
</dbReference>
<dbReference type="SMR" id="Q8UDB4"/>
<dbReference type="STRING" id="176299.Atu2213"/>
<dbReference type="EnsemblBacteria" id="AAK87955">
    <property type="protein sequence ID" value="AAK87955"/>
    <property type="gene ID" value="Atu2213"/>
</dbReference>
<dbReference type="KEGG" id="atu:Atu2213"/>
<dbReference type="PATRIC" id="fig|176299.10.peg.2222"/>
<dbReference type="eggNOG" id="COG0682">
    <property type="taxonomic scope" value="Bacteria"/>
</dbReference>
<dbReference type="HOGENOM" id="CLU_013386_1_0_5"/>
<dbReference type="OrthoDB" id="871140at2"/>
<dbReference type="PhylomeDB" id="Q8UDB4"/>
<dbReference type="BioCyc" id="AGRO:ATU2213-MONOMER"/>
<dbReference type="UniPathway" id="UPA00664"/>
<dbReference type="Proteomes" id="UP000000813">
    <property type="component" value="Chromosome circular"/>
</dbReference>
<dbReference type="GO" id="GO:0005886">
    <property type="term" value="C:plasma membrane"/>
    <property type="evidence" value="ECO:0007669"/>
    <property type="project" value="UniProtKB-SubCell"/>
</dbReference>
<dbReference type="GO" id="GO:0008961">
    <property type="term" value="F:phosphatidylglycerol-prolipoprotein diacylglyceryl transferase activity"/>
    <property type="evidence" value="ECO:0007669"/>
    <property type="project" value="UniProtKB-UniRule"/>
</dbReference>
<dbReference type="GO" id="GO:0042158">
    <property type="term" value="P:lipoprotein biosynthetic process"/>
    <property type="evidence" value="ECO:0007669"/>
    <property type="project" value="UniProtKB-UniRule"/>
</dbReference>
<dbReference type="HAMAP" id="MF_01147">
    <property type="entry name" value="Lgt"/>
    <property type="match status" value="1"/>
</dbReference>
<dbReference type="InterPro" id="IPR001640">
    <property type="entry name" value="Lgt"/>
</dbReference>
<dbReference type="NCBIfam" id="TIGR00544">
    <property type="entry name" value="lgt"/>
    <property type="match status" value="1"/>
</dbReference>
<dbReference type="PANTHER" id="PTHR30589:SF0">
    <property type="entry name" value="PHOSPHATIDYLGLYCEROL--PROLIPOPROTEIN DIACYLGLYCERYL TRANSFERASE"/>
    <property type="match status" value="1"/>
</dbReference>
<dbReference type="PANTHER" id="PTHR30589">
    <property type="entry name" value="PROLIPOPROTEIN DIACYLGLYCERYL TRANSFERASE"/>
    <property type="match status" value="1"/>
</dbReference>
<dbReference type="Pfam" id="PF01790">
    <property type="entry name" value="LGT"/>
    <property type="match status" value="1"/>
</dbReference>
<dbReference type="PROSITE" id="PS01311">
    <property type="entry name" value="LGT"/>
    <property type="match status" value="1"/>
</dbReference>
<proteinExistence type="inferred from homology"/>
<accession>Q8UDB4</accession>
<keyword id="KW-0997">Cell inner membrane</keyword>
<keyword id="KW-1003">Cell membrane</keyword>
<keyword id="KW-0472">Membrane</keyword>
<keyword id="KW-1185">Reference proteome</keyword>
<keyword id="KW-0808">Transferase</keyword>
<keyword id="KW-0812">Transmembrane</keyword>
<keyword id="KW-1133">Transmembrane helix</keyword>
<reference key="1">
    <citation type="journal article" date="2001" name="Science">
        <title>The genome of the natural genetic engineer Agrobacterium tumefaciens C58.</title>
        <authorList>
            <person name="Wood D.W."/>
            <person name="Setubal J.C."/>
            <person name="Kaul R."/>
            <person name="Monks D.E."/>
            <person name="Kitajima J.P."/>
            <person name="Okura V.K."/>
            <person name="Zhou Y."/>
            <person name="Chen L."/>
            <person name="Wood G.E."/>
            <person name="Almeida N.F. Jr."/>
            <person name="Woo L."/>
            <person name="Chen Y."/>
            <person name="Paulsen I.T."/>
            <person name="Eisen J.A."/>
            <person name="Karp P.D."/>
            <person name="Bovee D. Sr."/>
            <person name="Chapman P."/>
            <person name="Clendenning J."/>
            <person name="Deatherage G."/>
            <person name="Gillet W."/>
            <person name="Grant C."/>
            <person name="Kutyavin T."/>
            <person name="Levy R."/>
            <person name="Li M.-J."/>
            <person name="McClelland E."/>
            <person name="Palmieri A."/>
            <person name="Raymond C."/>
            <person name="Rouse G."/>
            <person name="Saenphimmachak C."/>
            <person name="Wu Z."/>
            <person name="Romero P."/>
            <person name="Gordon D."/>
            <person name="Zhang S."/>
            <person name="Yoo H."/>
            <person name="Tao Y."/>
            <person name="Biddle P."/>
            <person name="Jung M."/>
            <person name="Krespan W."/>
            <person name="Perry M."/>
            <person name="Gordon-Kamm B."/>
            <person name="Liao L."/>
            <person name="Kim S."/>
            <person name="Hendrick C."/>
            <person name="Zhao Z.-Y."/>
            <person name="Dolan M."/>
            <person name="Chumley F."/>
            <person name="Tingey S.V."/>
            <person name="Tomb J.-F."/>
            <person name="Gordon M.P."/>
            <person name="Olson M.V."/>
            <person name="Nester E.W."/>
        </authorList>
    </citation>
    <scope>NUCLEOTIDE SEQUENCE [LARGE SCALE GENOMIC DNA]</scope>
    <source>
        <strain>C58 / ATCC 33970</strain>
    </source>
</reference>
<reference key="2">
    <citation type="journal article" date="2001" name="Science">
        <title>Genome sequence of the plant pathogen and biotechnology agent Agrobacterium tumefaciens C58.</title>
        <authorList>
            <person name="Goodner B."/>
            <person name="Hinkle G."/>
            <person name="Gattung S."/>
            <person name="Miller N."/>
            <person name="Blanchard M."/>
            <person name="Qurollo B."/>
            <person name="Goldman B.S."/>
            <person name="Cao Y."/>
            <person name="Askenazi M."/>
            <person name="Halling C."/>
            <person name="Mullin L."/>
            <person name="Houmiel K."/>
            <person name="Gordon J."/>
            <person name="Vaudin M."/>
            <person name="Iartchouk O."/>
            <person name="Epp A."/>
            <person name="Liu F."/>
            <person name="Wollam C."/>
            <person name="Allinger M."/>
            <person name="Doughty D."/>
            <person name="Scott C."/>
            <person name="Lappas C."/>
            <person name="Markelz B."/>
            <person name="Flanagan C."/>
            <person name="Crowell C."/>
            <person name="Gurson J."/>
            <person name="Lomo C."/>
            <person name="Sear C."/>
            <person name="Strub G."/>
            <person name="Cielo C."/>
            <person name="Slater S."/>
        </authorList>
    </citation>
    <scope>NUCLEOTIDE SEQUENCE [LARGE SCALE GENOMIC DNA]</scope>
    <source>
        <strain>C58 / ATCC 33970</strain>
    </source>
</reference>
<feature type="chain" id="PRO_0000172539" description="Phosphatidylglycerol--prolipoprotein diacylglyceryl transferase">
    <location>
        <begin position="1"/>
        <end position="280"/>
    </location>
</feature>
<feature type="transmembrane region" description="Helical" evidence="1">
    <location>
        <begin position="26"/>
        <end position="46"/>
    </location>
</feature>
<feature type="transmembrane region" description="Helical" evidence="1">
    <location>
        <begin position="71"/>
        <end position="91"/>
    </location>
</feature>
<feature type="transmembrane region" description="Helical" evidence="1">
    <location>
        <begin position="106"/>
        <end position="126"/>
    </location>
</feature>
<feature type="transmembrane region" description="Helical" evidence="1">
    <location>
        <begin position="132"/>
        <end position="152"/>
    </location>
</feature>
<feature type="transmembrane region" description="Helical" evidence="1">
    <location>
        <begin position="193"/>
        <end position="213"/>
    </location>
</feature>
<feature type="transmembrane region" description="Helical" evidence="1">
    <location>
        <begin position="217"/>
        <end position="237"/>
    </location>
</feature>
<feature type="transmembrane region" description="Helical" evidence="1">
    <location>
        <begin position="251"/>
        <end position="271"/>
    </location>
</feature>
<feature type="binding site" evidence="1">
    <location>
        <position position="154"/>
    </location>
    <ligand>
        <name>a 1,2-diacyl-sn-glycero-3-phospho-(1'-sn-glycerol)</name>
        <dbReference type="ChEBI" id="CHEBI:64716"/>
    </ligand>
</feature>
<protein>
    <recommendedName>
        <fullName evidence="1">Phosphatidylglycerol--prolipoprotein diacylglyceryl transferase</fullName>
        <ecNumber evidence="1">2.5.1.145</ecNumber>
    </recommendedName>
</protein>